<accession>Q8X7U3</accession>
<sequence>MSKLDLNALNELPKVDRILALAETNAQLEKLDAEGRVAWALDNLPGEYVLSSSFGIQAAVSLHLVNQIRPDIPVILTDTGYLFPETYRFIDELTDKLKLNLKVYRATESAAWQEARYGKLWEQGVEGIEKYNDINKVEPMNRALKELNAQTWFAGLRREQSGSRANLPVLAIQRGVFKVLPIIDWDNRTIYQYLQKNGLKYHPLWDEGYLSVGDTHTTRKWEPGMAEEETRFFGLKRECGLHEG</sequence>
<comment type="function">
    <text evidence="2">Catalyzes the formation of sulfite from phosphoadenosine 5'-phosphosulfate (PAPS) using thioredoxin as an electron donor.</text>
</comment>
<comment type="catalytic activity">
    <reaction evidence="2">
        <text>[thioredoxin]-disulfide + sulfite + adenosine 3',5'-bisphosphate + 2 H(+) = [thioredoxin]-dithiol + 3'-phosphoadenylyl sulfate</text>
        <dbReference type="Rhea" id="RHEA:11724"/>
        <dbReference type="Rhea" id="RHEA-COMP:10698"/>
        <dbReference type="Rhea" id="RHEA-COMP:10700"/>
        <dbReference type="ChEBI" id="CHEBI:15378"/>
        <dbReference type="ChEBI" id="CHEBI:17359"/>
        <dbReference type="ChEBI" id="CHEBI:29950"/>
        <dbReference type="ChEBI" id="CHEBI:50058"/>
        <dbReference type="ChEBI" id="CHEBI:58339"/>
        <dbReference type="ChEBI" id="CHEBI:58343"/>
        <dbReference type="EC" id="1.8.4.8"/>
    </reaction>
</comment>
<comment type="pathway">
    <text evidence="2">Sulfur metabolism; hydrogen sulfide biosynthesis; sulfite from sulfate: step 3/3.</text>
</comment>
<comment type="subcellular location">
    <subcellularLocation>
        <location evidence="2">Cytoplasm</location>
    </subcellularLocation>
</comment>
<comment type="similarity">
    <text evidence="2">Belongs to the PAPS reductase family. CysH subfamily.</text>
</comment>
<keyword id="KW-0963">Cytoplasm</keyword>
<keyword id="KW-0560">Oxidoreductase</keyword>
<keyword id="KW-1185">Reference proteome</keyword>
<dbReference type="EC" id="1.8.4.8" evidence="2"/>
<dbReference type="EMBL" id="AE005174">
    <property type="protein sequence ID" value="AAG57870.1"/>
    <property type="molecule type" value="Genomic_DNA"/>
</dbReference>
<dbReference type="EMBL" id="BA000007">
    <property type="protein sequence ID" value="BAB37040.1"/>
    <property type="molecule type" value="Genomic_DNA"/>
</dbReference>
<dbReference type="PIR" id="A91081">
    <property type="entry name" value="A91081"/>
</dbReference>
<dbReference type="PIR" id="B85926">
    <property type="entry name" value="B85926"/>
</dbReference>
<dbReference type="RefSeq" id="NP_311644.1">
    <property type="nucleotide sequence ID" value="NC_002695.1"/>
</dbReference>
<dbReference type="RefSeq" id="WP_000039864.1">
    <property type="nucleotide sequence ID" value="NZ_VOAI01000003.1"/>
</dbReference>
<dbReference type="SMR" id="Q8X7U3"/>
<dbReference type="STRING" id="155864.Z4072"/>
<dbReference type="GeneID" id="914661"/>
<dbReference type="KEGG" id="ece:Z4072"/>
<dbReference type="KEGG" id="ecs:ECs_3617"/>
<dbReference type="PATRIC" id="fig|386585.9.peg.3781"/>
<dbReference type="eggNOG" id="COG0175">
    <property type="taxonomic scope" value="Bacteria"/>
</dbReference>
<dbReference type="HOGENOM" id="CLU_044089_3_0_6"/>
<dbReference type="OMA" id="PIARWTQ"/>
<dbReference type="UniPathway" id="UPA00140">
    <property type="reaction ID" value="UER00206"/>
</dbReference>
<dbReference type="Proteomes" id="UP000000558">
    <property type="component" value="Chromosome"/>
</dbReference>
<dbReference type="Proteomes" id="UP000002519">
    <property type="component" value="Chromosome"/>
</dbReference>
<dbReference type="GO" id="GO:0005737">
    <property type="term" value="C:cytoplasm"/>
    <property type="evidence" value="ECO:0007669"/>
    <property type="project" value="UniProtKB-SubCell"/>
</dbReference>
<dbReference type="GO" id="GO:0004604">
    <property type="term" value="F:phosphoadenylyl-sulfate reductase (thioredoxin) activity"/>
    <property type="evidence" value="ECO:0007669"/>
    <property type="project" value="UniProtKB-UniRule"/>
</dbReference>
<dbReference type="GO" id="GO:0070814">
    <property type="term" value="P:hydrogen sulfide biosynthetic process"/>
    <property type="evidence" value="ECO:0007669"/>
    <property type="project" value="UniProtKB-UniRule"/>
</dbReference>
<dbReference type="GO" id="GO:0019379">
    <property type="term" value="P:sulfate assimilation, phosphoadenylyl sulfate reduction by phosphoadenylyl-sulfate reductase (thioredoxin)"/>
    <property type="evidence" value="ECO:0007669"/>
    <property type="project" value="UniProtKB-UniRule"/>
</dbReference>
<dbReference type="CDD" id="cd23945">
    <property type="entry name" value="PAPS_reductase"/>
    <property type="match status" value="1"/>
</dbReference>
<dbReference type="FunFam" id="3.40.50.620:FF:000043">
    <property type="entry name" value="Phosphoadenosine phosphosulfate reductase"/>
    <property type="match status" value="1"/>
</dbReference>
<dbReference type="Gene3D" id="3.40.50.620">
    <property type="entry name" value="HUPs"/>
    <property type="match status" value="1"/>
</dbReference>
<dbReference type="HAMAP" id="MF_00063">
    <property type="entry name" value="CysH"/>
    <property type="match status" value="1"/>
</dbReference>
<dbReference type="InterPro" id="IPR004511">
    <property type="entry name" value="PAPS/APS_Rdtase"/>
</dbReference>
<dbReference type="InterPro" id="IPR002500">
    <property type="entry name" value="PAPS_reduct_dom"/>
</dbReference>
<dbReference type="InterPro" id="IPR011800">
    <property type="entry name" value="PAPS_reductase_CysH"/>
</dbReference>
<dbReference type="InterPro" id="IPR014729">
    <property type="entry name" value="Rossmann-like_a/b/a_fold"/>
</dbReference>
<dbReference type="NCBIfam" id="TIGR00434">
    <property type="entry name" value="cysH"/>
    <property type="match status" value="1"/>
</dbReference>
<dbReference type="NCBIfam" id="TIGR02057">
    <property type="entry name" value="PAPS_reductase"/>
    <property type="match status" value="1"/>
</dbReference>
<dbReference type="NCBIfam" id="NF002537">
    <property type="entry name" value="PRK02090.1"/>
    <property type="match status" value="1"/>
</dbReference>
<dbReference type="PANTHER" id="PTHR46509">
    <property type="entry name" value="PHOSPHOADENOSINE PHOSPHOSULFATE REDUCTASE"/>
    <property type="match status" value="1"/>
</dbReference>
<dbReference type="PANTHER" id="PTHR46509:SF1">
    <property type="entry name" value="PHOSPHOADENOSINE PHOSPHOSULFATE REDUCTASE"/>
    <property type="match status" value="1"/>
</dbReference>
<dbReference type="Pfam" id="PF01507">
    <property type="entry name" value="PAPS_reduct"/>
    <property type="match status" value="1"/>
</dbReference>
<dbReference type="PIRSF" id="PIRSF000857">
    <property type="entry name" value="PAPS_reductase"/>
    <property type="match status" value="1"/>
</dbReference>
<dbReference type="SUPFAM" id="SSF52402">
    <property type="entry name" value="Adenine nucleotide alpha hydrolases-like"/>
    <property type="match status" value="1"/>
</dbReference>
<proteinExistence type="inferred from homology"/>
<name>CYSH_ECO57</name>
<evidence type="ECO:0000250" key="1"/>
<evidence type="ECO:0000255" key="2">
    <source>
        <dbReference type="HAMAP-Rule" id="MF_00063"/>
    </source>
</evidence>
<gene>
    <name evidence="2" type="primary">cysH</name>
    <name type="ordered locus">Z4072</name>
    <name type="ordered locus">ECs3617</name>
</gene>
<organism>
    <name type="scientific">Escherichia coli O157:H7</name>
    <dbReference type="NCBI Taxonomy" id="83334"/>
    <lineage>
        <taxon>Bacteria</taxon>
        <taxon>Pseudomonadati</taxon>
        <taxon>Pseudomonadota</taxon>
        <taxon>Gammaproteobacteria</taxon>
        <taxon>Enterobacterales</taxon>
        <taxon>Enterobacteriaceae</taxon>
        <taxon>Escherichia</taxon>
    </lineage>
</organism>
<feature type="initiator methionine" description="Removed" evidence="1">
    <location>
        <position position="1"/>
    </location>
</feature>
<feature type="chain" id="PRO_0000100632" description="Phosphoadenosine 5'-phosphosulfate reductase">
    <location>
        <begin position="2"/>
        <end position="244"/>
    </location>
</feature>
<feature type="active site" description="Nucleophile; cysteine thiosulfonate intermediate" evidence="2">
    <location>
        <position position="239"/>
    </location>
</feature>
<reference key="1">
    <citation type="journal article" date="2001" name="Nature">
        <title>Genome sequence of enterohaemorrhagic Escherichia coli O157:H7.</title>
        <authorList>
            <person name="Perna N.T."/>
            <person name="Plunkett G. III"/>
            <person name="Burland V."/>
            <person name="Mau B."/>
            <person name="Glasner J.D."/>
            <person name="Rose D.J."/>
            <person name="Mayhew G.F."/>
            <person name="Evans P.S."/>
            <person name="Gregor J."/>
            <person name="Kirkpatrick H.A."/>
            <person name="Posfai G."/>
            <person name="Hackett J."/>
            <person name="Klink S."/>
            <person name="Boutin A."/>
            <person name="Shao Y."/>
            <person name="Miller L."/>
            <person name="Grotbeck E.J."/>
            <person name="Davis N.W."/>
            <person name="Lim A."/>
            <person name="Dimalanta E.T."/>
            <person name="Potamousis K."/>
            <person name="Apodaca J."/>
            <person name="Anantharaman T.S."/>
            <person name="Lin J."/>
            <person name="Yen G."/>
            <person name="Schwartz D.C."/>
            <person name="Welch R.A."/>
            <person name="Blattner F.R."/>
        </authorList>
    </citation>
    <scope>NUCLEOTIDE SEQUENCE [LARGE SCALE GENOMIC DNA]</scope>
    <source>
        <strain>O157:H7 / EDL933 / ATCC 700927 / EHEC</strain>
    </source>
</reference>
<reference key="2">
    <citation type="journal article" date="2001" name="DNA Res.">
        <title>Complete genome sequence of enterohemorrhagic Escherichia coli O157:H7 and genomic comparison with a laboratory strain K-12.</title>
        <authorList>
            <person name="Hayashi T."/>
            <person name="Makino K."/>
            <person name="Ohnishi M."/>
            <person name="Kurokawa K."/>
            <person name="Ishii K."/>
            <person name="Yokoyama K."/>
            <person name="Han C.-G."/>
            <person name="Ohtsubo E."/>
            <person name="Nakayama K."/>
            <person name="Murata T."/>
            <person name="Tanaka M."/>
            <person name="Tobe T."/>
            <person name="Iida T."/>
            <person name="Takami H."/>
            <person name="Honda T."/>
            <person name="Sasakawa C."/>
            <person name="Ogasawara N."/>
            <person name="Yasunaga T."/>
            <person name="Kuhara S."/>
            <person name="Shiba T."/>
            <person name="Hattori M."/>
            <person name="Shinagawa H."/>
        </authorList>
    </citation>
    <scope>NUCLEOTIDE SEQUENCE [LARGE SCALE GENOMIC DNA]</scope>
    <source>
        <strain>O157:H7 / Sakai / RIMD 0509952 / EHEC</strain>
    </source>
</reference>
<protein>
    <recommendedName>
        <fullName evidence="2">Phosphoadenosine 5'-phosphosulfate reductase</fullName>
        <shortName evidence="2">PAPS reductase</shortName>
        <ecNumber evidence="2">1.8.4.8</ecNumber>
    </recommendedName>
    <alternativeName>
        <fullName evidence="2">3'-phosphoadenylylsulfate reductase</fullName>
    </alternativeName>
    <alternativeName>
        <fullName evidence="2">PAPS reductase, thioredoxin dependent</fullName>
    </alternativeName>
    <alternativeName>
        <fullName evidence="2">PAPS sulfotransferase</fullName>
    </alternativeName>
    <alternativeName>
        <fullName evidence="2">PAdoPS reductase</fullName>
    </alternativeName>
</protein>